<proteinExistence type="inferred from homology"/>
<organism>
    <name type="scientific">Neurospora crassa (strain ATCC 24698 / 74-OR23-1A / CBS 708.71 / DSM 1257 / FGSC 987)</name>
    <dbReference type="NCBI Taxonomy" id="367110"/>
    <lineage>
        <taxon>Eukaryota</taxon>
        <taxon>Fungi</taxon>
        <taxon>Dikarya</taxon>
        <taxon>Ascomycota</taxon>
        <taxon>Pezizomycotina</taxon>
        <taxon>Sordariomycetes</taxon>
        <taxon>Sordariomycetidae</taxon>
        <taxon>Sordariales</taxon>
        <taxon>Sordariaceae</taxon>
        <taxon>Neurospora</taxon>
    </lineage>
</organism>
<name>RT106_NEUCR</name>
<accession>Q7S4I9</accession>
<evidence type="ECO:0000250" key="1"/>
<evidence type="ECO:0000256" key="2">
    <source>
        <dbReference type="SAM" id="MobiDB-lite"/>
    </source>
</evidence>
<evidence type="ECO:0000305" key="3"/>
<comment type="function">
    <text evidence="1">Histones H3 and H4 chaperone involved in the nucleosome formation and heterochromatin silencing. Required for the deposition of H3K56ac-carrying H3-H4 complex onto newly-replicated DNA. Plays a role in the transcriptional regulation of the cell-cycle dependent histone genes by creating a repressive structure at the core histone gene promoter (By similarity).</text>
</comment>
<comment type="subunit">
    <text evidence="1">Interacts with histones H3 and H4.</text>
</comment>
<comment type="subcellular location">
    <subcellularLocation>
        <location evidence="1">Nucleus</location>
    </subcellularLocation>
    <subcellularLocation>
        <location evidence="1">Chromosome</location>
    </subcellularLocation>
</comment>
<comment type="similarity">
    <text evidence="3">Belongs to the RTT106 family.</text>
</comment>
<keyword id="KW-0143">Chaperone</keyword>
<keyword id="KW-0158">Chromosome</keyword>
<keyword id="KW-0238">DNA-binding</keyword>
<keyword id="KW-0539">Nucleus</keyword>
<keyword id="KW-1185">Reference proteome</keyword>
<keyword id="KW-0804">Transcription</keyword>
<keyword id="KW-0805">Transcription regulation</keyword>
<dbReference type="EMBL" id="CM002242">
    <property type="protein sequence ID" value="EAA30417.1"/>
    <property type="molecule type" value="Genomic_DNA"/>
</dbReference>
<dbReference type="RefSeq" id="XP_959653.1">
    <property type="nucleotide sequence ID" value="XM_954560.2"/>
</dbReference>
<dbReference type="SMR" id="Q7S4I9"/>
<dbReference type="FunCoup" id="Q7S4I9">
    <property type="interactions" value="104"/>
</dbReference>
<dbReference type="STRING" id="367110.Q7S4I9"/>
<dbReference type="PaxDb" id="5141-EFNCRP00000008353"/>
<dbReference type="EnsemblFungi" id="EAA30417">
    <property type="protein sequence ID" value="EAA30417"/>
    <property type="gene ID" value="NCU08161"/>
</dbReference>
<dbReference type="GeneID" id="3875809"/>
<dbReference type="KEGG" id="ncr:NCU08161"/>
<dbReference type="VEuPathDB" id="FungiDB:NCU08161"/>
<dbReference type="HOGENOM" id="CLU_033828_0_0_1"/>
<dbReference type="InParanoid" id="Q7S4I9"/>
<dbReference type="OMA" id="AMPEAHR"/>
<dbReference type="OrthoDB" id="75754at2759"/>
<dbReference type="Proteomes" id="UP000001805">
    <property type="component" value="Chromosome 7, Linkage Group VII"/>
</dbReference>
<dbReference type="GO" id="GO:0005694">
    <property type="term" value="C:chromosome"/>
    <property type="evidence" value="ECO:0007669"/>
    <property type="project" value="UniProtKB-SubCell"/>
</dbReference>
<dbReference type="GO" id="GO:0005634">
    <property type="term" value="C:nucleus"/>
    <property type="evidence" value="ECO:0007669"/>
    <property type="project" value="UniProtKB-SubCell"/>
</dbReference>
<dbReference type="GO" id="GO:0003677">
    <property type="term" value="F:DNA binding"/>
    <property type="evidence" value="ECO:0007669"/>
    <property type="project" value="UniProtKB-KW"/>
</dbReference>
<dbReference type="GO" id="GO:0042393">
    <property type="term" value="F:histone binding"/>
    <property type="evidence" value="ECO:0000318"/>
    <property type="project" value="GO_Central"/>
</dbReference>
<dbReference type="GO" id="GO:0031491">
    <property type="term" value="F:nucleosome binding"/>
    <property type="evidence" value="ECO:0000318"/>
    <property type="project" value="GO_Central"/>
</dbReference>
<dbReference type="Gene3D" id="2.30.29.30">
    <property type="entry name" value="Pleckstrin-homology domain (PH domain)/Phosphotyrosine-binding domain (PTB)"/>
    <property type="match status" value="1"/>
</dbReference>
<dbReference type="InterPro" id="IPR011993">
    <property type="entry name" value="PH-like_dom_sf"/>
</dbReference>
<dbReference type="InterPro" id="IPR013719">
    <property type="entry name" value="RTT106/SPT16-like_middle_dom"/>
</dbReference>
<dbReference type="InterPro" id="IPR050454">
    <property type="entry name" value="RTT106/SSRP1_HistChap/FACT"/>
</dbReference>
<dbReference type="PANTHER" id="PTHR45849">
    <property type="entry name" value="FACT COMPLEX SUBUNIT SSRP1"/>
    <property type="match status" value="1"/>
</dbReference>
<dbReference type="PANTHER" id="PTHR45849:SF3">
    <property type="entry name" value="HISTONE CHAPERONE RTT106"/>
    <property type="match status" value="1"/>
</dbReference>
<dbReference type="Pfam" id="PF08512">
    <property type="entry name" value="Rttp106-like_middle"/>
    <property type="match status" value="1"/>
</dbReference>
<dbReference type="SMART" id="SM01287">
    <property type="entry name" value="Rtt106"/>
    <property type="match status" value="1"/>
</dbReference>
<dbReference type="SUPFAM" id="SSF50729">
    <property type="entry name" value="PH domain-like"/>
    <property type="match status" value="1"/>
</dbReference>
<sequence length="469" mass="50909">MAAKLDSQLLGLVFQSRPDILKGIQEAADSPARIDLFNNIASFVYERIADNTSEEPATKRRRVEAQTSGPNGAAHPIAGSQAAVLGADAAAAEPVLLEIKDISVSVPQRKKYDLCFTKNFLYARASGSPVPVQGIVYPWKDIEHAFYLPVPDKSQVQHNYVLLPRNSYLPTTKSQQSADQQTQQQTSAPLEPLVFTIPSTAPKPGTITGPSAAAAAPVSDSYATLFHWALTTSLHAAGNHACELVSSDPKVFHSVARQAYRPQEKAVHVKAFRGSKDGFLFFLPTGILWGFKKPLLFLPLDKIVAISYTSVLQRTFNIVVELEGGGEGSEEGGQEIEFSMLDQEDYAGIDQSYVRRHGLADRSMAEQRKAKKQLAENAKKAAANGEEGEGGEGGEAGDGLTELERAQKEEEQRLQDEEDEEEEDYDPGSEGESEGSGSSSEEEEEEEDGEGEGDEDDDEDMGEGLEGEE</sequence>
<feature type="chain" id="PRO_0000320497" description="Histone chaperone rtt-106">
    <location>
        <begin position="1"/>
        <end position="469"/>
    </location>
</feature>
<feature type="region of interest" description="Disordered" evidence="2">
    <location>
        <begin position="54"/>
        <end position="73"/>
    </location>
</feature>
<feature type="region of interest" description="Disordered" evidence="2">
    <location>
        <begin position="364"/>
        <end position="469"/>
    </location>
</feature>
<feature type="compositionally biased region" description="Basic and acidic residues" evidence="2">
    <location>
        <begin position="364"/>
        <end position="379"/>
    </location>
</feature>
<feature type="compositionally biased region" description="Basic and acidic residues" evidence="2">
    <location>
        <begin position="402"/>
        <end position="415"/>
    </location>
</feature>
<feature type="compositionally biased region" description="Acidic residues" evidence="2">
    <location>
        <begin position="416"/>
        <end position="433"/>
    </location>
</feature>
<feature type="compositionally biased region" description="Acidic residues" evidence="2">
    <location>
        <begin position="440"/>
        <end position="469"/>
    </location>
</feature>
<protein>
    <recommendedName>
        <fullName>Histone chaperone rtt-106</fullName>
    </recommendedName>
</protein>
<gene>
    <name type="primary">rtt-106</name>
    <name type="ORF">NCU08161</name>
</gene>
<reference key="1">
    <citation type="journal article" date="2003" name="Nature">
        <title>The genome sequence of the filamentous fungus Neurospora crassa.</title>
        <authorList>
            <person name="Galagan J.E."/>
            <person name="Calvo S.E."/>
            <person name="Borkovich K.A."/>
            <person name="Selker E.U."/>
            <person name="Read N.D."/>
            <person name="Jaffe D.B."/>
            <person name="FitzHugh W."/>
            <person name="Ma L.-J."/>
            <person name="Smirnov S."/>
            <person name="Purcell S."/>
            <person name="Rehman B."/>
            <person name="Elkins T."/>
            <person name="Engels R."/>
            <person name="Wang S."/>
            <person name="Nielsen C.B."/>
            <person name="Butler J."/>
            <person name="Endrizzi M."/>
            <person name="Qui D."/>
            <person name="Ianakiev P."/>
            <person name="Bell-Pedersen D."/>
            <person name="Nelson M.A."/>
            <person name="Werner-Washburne M."/>
            <person name="Selitrennikoff C.P."/>
            <person name="Kinsey J.A."/>
            <person name="Braun E.L."/>
            <person name="Zelter A."/>
            <person name="Schulte U."/>
            <person name="Kothe G.O."/>
            <person name="Jedd G."/>
            <person name="Mewes H.-W."/>
            <person name="Staben C."/>
            <person name="Marcotte E."/>
            <person name="Greenberg D."/>
            <person name="Roy A."/>
            <person name="Foley K."/>
            <person name="Naylor J."/>
            <person name="Stange-Thomann N."/>
            <person name="Barrett R."/>
            <person name="Gnerre S."/>
            <person name="Kamal M."/>
            <person name="Kamvysselis M."/>
            <person name="Mauceli E.W."/>
            <person name="Bielke C."/>
            <person name="Rudd S."/>
            <person name="Frishman D."/>
            <person name="Krystofova S."/>
            <person name="Rasmussen C."/>
            <person name="Metzenberg R.L."/>
            <person name="Perkins D.D."/>
            <person name="Kroken S."/>
            <person name="Cogoni C."/>
            <person name="Macino G."/>
            <person name="Catcheside D.E.A."/>
            <person name="Li W."/>
            <person name="Pratt R.J."/>
            <person name="Osmani S.A."/>
            <person name="DeSouza C.P.C."/>
            <person name="Glass N.L."/>
            <person name="Orbach M.J."/>
            <person name="Berglund J.A."/>
            <person name="Voelker R."/>
            <person name="Yarden O."/>
            <person name="Plamann M."/>
            <person name="Seiler S."/>
            <person name="Dunlap J.C."/>
            <person name="Radford A."/>
            <person name="Aramayo R."/>
            <person name="Natvig D.O."/>
            <person name="Alex L.A."/>
            <person name="Mannhaupt G."/>
            <person name="Ebbole D.J."/>
            <person name="Freitag M."/>
            <person name="Paulsen I."/>
            <person name="Sachs M.S."/>
            <person name="Lander E.S."/>
            <person name="Nusbaum C."/>
            <person name="Birren B.W."/>
        </authorList>
    </citation>
    <scope>NUCLEOTIDE SEQUENCE [LARGE SCALE GENOMIC DNA]</scope>
    <source>
        <strain>ATCC 24698 / 74-OR23-1A / CBS 708.71 / DSM 1257 / FGSC 987</strain>
    </source>
</reference>